<reference key="1">
    <citation type="journal article" date="1995" name="J. Cell Biol.">
        <title>Molecular cloning of chick beta-tectorin, an extracellular matrix molecule of the inner ear.</title>
        <authorList>
            <person name="Killick R."/>
            <person name="Legan P.K."/>
            <person name="Malenczak C."/>
            <person name="Richardson G.P."/>
        </authorList>
    </citation>
    <scope>NUCLEOTIDE SEQUENCE [MRNA]</scope>
    <source>
        <strain>Isa brown</strain>
        <tissue>Cochlear duct</tissue>
    </source>
</reference>
<reference key="2">
    <citation type="journal article" date="1992" name="Hear. Res.">
        <title>The protein composition of the avian tectorial membrane.</title>
        <authorList>
            <person name="Killick R."/>
            <person name="Malenczak C."/>
            <person name="Richardson G.P."/>
        </authorList>
    </citation>
    <scope>FUNCTION</scope>
</reference>
<reference key="3">
    <citation type="journal article" date="1998" name="Proc. Natl. Acad. Sci. U.S.A.">
        <title>Molecular markers for cell types of the inner ear and candidate genes for hearing disorders.</title>
        <authorList>
            <person name="Heller S."/>
            <person name="Sheane C.A."/>
            <person name="Javed Z."/>
            <person name="Hudspeth A.J."/>
        </authorList>
    </citation>
    <scope>TISSUE SPECIFICITY</scope>
    <source>
        <strain>White leghorn</strain>
    </source>
</reference>
<proteinExistence type="evidence at transcript level"/>
<accession>P54097</accession>
<organism>
    <name type="scientific">Gallus gallus</name>
    <name type="common">Chicken</name>
    <dbReference type="NCBI Taxonomy" id="9031"/>
    <lineage>
        <taxon>Eukaryota</taxon>
        <taxon>Metazoa</taxon>
        <taxon>Chordata</taxon>
        <taxon>Craniata</taxon>
        <taxon>Vertebrata</taxon>
        <taxon>Euteleostomi</taxon>
        <taxon>Archelosauria</taxon>
        <taxon>Archosauria</taxon>
        <taxon>Dinosauria</taxon>
        <taxon>Saurischia</taxon>
        <taxon>Theropoda</taxon>
        <taxon>Coelurosauria</taxon>
        <taxon>Aves</taxon>
        <taxon>Neognathae</taxon>
        <taxon>Galloanserae</taxon>
        <taxon>Galliformes</taxon>
        <taxon>Phasianidae</taxon>
        <taxon>Phasianinae</taxon>
        <taxon>Gallus</taxon>
    </lineage>
</organism>
<name>TECTB_CHICK</name>
<gene>
    <name type="primary">TECTB</name>
</gene>
<keyword id="KW-1003">Cell membrane</keyword>
<keyword id="KW-1015">Disulfide bond</keyword>
<keyword id="KW-0272">Extracellular matrix</keyword>
<keyword id="KW-0325">Glycoprotein</keyword>
<keyword id="KW-0336">GPI-anchor</keyword>
<keyword id="KW-0449">Lipoprotein</keyword>
<keyword id="KW-0472">Membrane</keyword>
<keyword id="KW-1185">Reference proteome</keyword>
<keyword id="KW-0964">Secreted</keyword>
<keyword id="KW-0732">Signal</keyword>
<sequence>MVAVTVYLMVILAQAFAGPCTPNKADVILVYCYPRTIITKIPECPYGWEVNQLALGGICYNGIHDSGYYQFTIPDLSPKNKSYCGTQSEFKNPVYHFYNSIVSNDSTVIVKSQPVNYSFTCTYNANYLVNQAAFDQRVATIHVKNGSSGSFESQLSLNFYSNAKFSSIKEAPFVVETSEIGSDIFAGVEAKGLSDRFKVVLNNCWATPSSEYFYQVHWPLITKGCASDFSIVVHENGKTNRATFQFNAFRFQNIPKLSKVWLHCETHVCDSEKFSCPVTCDKRKQRMEQTGGVLVAEISVRNKGLSRFYMLSDVIFHLLFAIGFCAILL</sequence>
<dbReference type="EMBL" id="L38519">
    <property type="protein sequence ID" value="AAA92461.1"/>
    <property type="molecule type" value="mRNA"/>
</dbReference>
<dbReference type="PIR" id="A57246">
    <property type="entry name" value="A57246"/>
</dbReference>
<dbReference type="RefSeq" id="NP_990694.1">
    <property type="nucleotide sequence ID" value="NM_205363.1"/>
</dbReference>
<dbReference type="SMR" id="P54097"/>
<dbReference type="BioGRID" id="676576">
    <property type="interactions" value="1"/>
</dbReference>
<dbReference type="FunCoup" id="P54097">
    <property type="interactions" value="62"/>
</dbReference>
<dbReference type="IntAct" id="P54097">
    <property type="interactions" value="1"/>
</dbReference>
<dbReference type="STRING" id="9031.ENSGALP00000014293"/>
<dbReference type="GlyCosmos" id="P54097">
    <property type="glycosylation" value="4 sites, No reported glycans"/>
</dbReference>
<dbReference type="GlyGen" id="P54097">
    <property type="glycosylation" value="5 sites"/>
</dbReference>
<dbReference type="PaxDb" id="9031-ENSGALP00000014293"/>
<dbReference type="GeneID" id="396320"/>
<dbReference type="KEGG" id="gga:396320"/>
<dbReference type="CTD" id="6975"/>
<dbReference type="VEuPathDB" id="HostDB:geneid_396320"/>
<dbReference type="eggNOG" id="ENOG502RGQ6">
    <property type="taxonomic scope" value="Eukaryota"/>
</dbReference>
<dbReference type="InParanoid" id="P54097"/>
<dbReference type="OrthoDB" id="9856536at2759"/>
<dbReference type="PhylomeDB" id="P54097"/>
<dbReference type="PRO" id="PR:P54097"/>
<dbReference type="Proteomes" id="UP000000539">
    <property type="component" value="Unassembled WGS sequence"/>
</dbReference>
<dbReference type="GO" id="GO:0009986">
    <property type="term" value="C:cell surface"/>
    <property type="evidence" value="ECO:0000318"/>
    <property type="project" value="GO_Central"/>
</dbReference>
<dbReference type="GO" id="GO:0005615">
    <property type="term" value="C:extracellular space"/>
    <property type="evidence" value="ECO:0000318"/>
    <property type="project" value="GO_Central"/>
</dbReference>
<dbReference type="GO" id="GO:0005886">
    <property type="term" value="C:plasma membrane"/>
    <property type="evidence" value="ECO:0007669"/>
    <property type="project" value="UniProtKB-SubCell"/>
</dbReference>
<dbReference type="GO" id="GO:0098552">
    <property type="term" value="C:side of membrane"/>
    <property type="evidence" value="ECO:0007669"/>
    <property type="project" value="UniProtKB-KW"/>
</dbReference>
<dbReference type="GO" id="GO:0005201">
    <property type="term" value="F:extracellular matrix structural constituent"/>
    <property type="evidence" value="ECO:0000318"/>
    <property type="project" value="GO_Central"/>
</dbReference>
<dbReference type="FunFam" id="2.60.40.4100:FF:000006">
    <property type="entry name" value="beta-tectorin"/>
    <property type="match status" value="1"/>
</dbReference>
<dbReference type="Gene3D" id="2.60.40.4100">
    <property type="entry name" value="Zona pellucida, ZP-C domain"/>
    <property type="match status" value="1"/>
</dbReference>
<dbReference type="Gene3D" id="2.60.40.3210">
    <property type="entry name" value="Zona pellucida, ZP-N domain"/>
    <property type="match status" value="1"/>
</dbReference>
<dbReference type="InterPro" id="IPR055355">
    <property type="entry name" value="ZP-C"/>
</dbReference>
<dbReference type="InterPro" id="IPR042235">
    <property type="entry name" value="ZP-C_dom"/>
</dbReference>
<dbReference type="InterPro" id="IPR001507">
    <property type="entry name" value="ZP_dom"/>
</dbReference>
<dbReference type="InterPro" id="IPR017977">
    <property type="entry name" value="ZP_dom_CS"/>
</dbReference>
<dbReference type="PANTHER" id="PTHR14002:SF13">
    <property type="entry name" value="BETA-TECTORIN"/>
    <property type="match status" value="1"/>
</dbReference>
<dbReference type="PANTHER" id="PTHR14002">
    <property type="entry name" value="ENDOGLIN/TGF-BETA RECEPTOR TYPE III"/>
    <property type="match status" value="1"/>
</dbReference>
<dbReference type="Pfam" id="PF00100">
    <property type="entry name" value="Zona_pellucida"/>
    <property type="match status" value="1"/>
</dbReference>
<dbReference type="SMART" id="SM00241">
    <property type="entry name" value="ZP"/>
    <property type="match status" value="1"/>
</dbReference>
<dbReference type="PROSITE" id="PS00682">
    <property type="entry name" value="ZP_1"/>
    <property type="match status" value="1"/>
</dbReference>
<dbReference type="PROSITE" id="PS51034">
    <property type="entry name" value="ZP_2"/>
    <property type="match status" value="1"/>
</dbReference>
<protein>
    <recommendedName>
        <fullName>Beta-tectorin</fullName>
    </recommendedName>
</protein>
<comment type="function">
    <text evidence="4">One of the major non-collagenous components of the tectorial membrane. The tectorial membrane is an extracellular matrix of the inner ear that covers the neuroepithelium of the cochlea and contacts the stereocilia bundles of specialized sensory hair cells. Sound induces movement of these hair cells relative to the tectorial membrane, deflects the stereocilia and leads to fluctuations in hair-cell membrane potential, transducing sound into electrical signals.</text>
</comment>
<comment type="subunit">
    <text>May form homomeric filament after self-association or heteromeric filament after association with alpha-tectorin.</text>
</comment>
<comment type="subcellular location">
    <subcellularLocation>
        <location evidence="6">Cell membrane</location>
        <topology evidence="6">Lipid-anchor</topology>
        <topology evidence="6">GPI-anchor</topology>
        <orientation evidence="6">Extracellular side</orientation>
    </subcellularLocation>
    <subcellularLocation>
        <location>Secreted</location>
        <location>Extracellular space</location>
        <location>Extracellular matrix</location>
    </subcellularLocation>
    <text evidence="1">Found in the non-collagenous matrix of the tectorial membrane.</text>
</comment>
<comment type="tissue specificity">
    <text evidence="5">Exclusively expressed in the inner ear, where it is found in basilar papilla, clear cells, supporting cells, cuboidal cells and the lagena macula.</text>
</comment>
<comment type="domain">
    <text>Zona pellucida domain may enable to form filaments.</text>
</comment>
<comment type="PTM">
    <text>The N-terminus is blocked.</text>
</comment>
<comment type="PTM">
    <text>N-glycosylated.</text>
</comment>
<comment type="PTM">
    <text>The presence of a hydrophobic C-terminus preceded by a potential cleavage site strongly suggests that tectorins are synthesized as glycosylphosphatidylinositol-linked, membrane-bound precursors. Tectorins are targeted to the apical surface of the inner ear epithelia by the lipid and proteolytically released into the extracellular compartment.</text>
</comment>
<evidence type="ECO:0000250" key="1"/>
<evidence type="ECO:0000255" key="2"/>
<evidence type="ECO:0000255" key="3">
    <source>
        <dbReference type="PROSITE-ProRule" id="PRU00375"/>
    </source>
</evidence>
<evidence type="ECO:0000269" key="4">
    <source>
    </source>
</evidence>
<evidence type="ECO:0000269" key="5">
    <source>
    </source>
</evidence>
<evidence type="ECO:0000305" key="6"/>
<feature type="signal peptide" evidence="2">
    <location>
        <begin position="1"/>
        <end position="17"/>
    </location>
</feature>
<feature type="chain" id="PRO_0000041745" description="Beta-tectorin">
    <location>
        <begin position="18"/>
        <end position="304"/>
    </location>
</feature>
<feature type="propeptide" id="PRO_0000041746" description="Removed in mature form" evidence="2">
    <location>
        <begin position="305"/>
        <end position="329"/>
    </location>
</feature>
<feature type="domain" description="ZP" evidence="3">
    <location>
        <begin position="19"/>
        <end position="287"/>
    </location>
</feature>
<feature type="lipid moiety-binding region" description="GPI-anchor amidated glycine" evidence="2">
    <location>
        <position position="304"/>
    </location>
</feature>
<feature type="glycosylation site" description="N-linked (GlcNAc...) asparagine" evidence="2">
    <location>
        <position position="80"/>
    </location>
</feature>
<feature type="glycosylation site" description="N-linked (GlcNAc...) asparagine" evidence="2">
    <location>
        <position position="104"/>
    </location>
</feature>
<feature type="glycosylation site" description="N-linked (GlcNAc...) asparagine" evidence="2">
    <location>
        <position position="116"/>
    </location>
</feature>
<feature type="glycosylation site" description="N-linked (GlcNAc...) asparagine" evidence="2">
    <location>
        <position position="145"/>
    </location>
</feature>
<feature type="disulfide bond" evidence="1">
    <location>
        <begin position="204"/>
        <end position="264"/>
    </location>
</feature>